<organism>
    <name type="scientific">Salmonella enteritidis PT4 (strain P125109)</name>
    <dbReference type="NCBI Taxonomy" id="550537"/>
    <lineage>
        <taxon>Bacteria</taxon>
        <taxon>Pseudomonadati</taxon>
        <taxon>Pseudomonadota</taxon>
        <taxon>Gammaproteobacteria</taxon>
        <taxon>Enterobacterales</taxon>
        <taxon>Enterobacteriaceae</taxon>
        <taxon>Salmonella</taxon>
    </lineage>
</organism>
<dbReference type="EMBL" id="AM933172">
    <property type="protein sequence ID" value="CAR35719.1"/>
    <property type="molecule type" value="Genomic_DNA"/>
</dbReference>
<dbReference type="RefSeq" id="WP_000135199.1">
    <property type="nucleotide sequence ID" value="NC_011294.1"/>
</dbReference>
<dbReference type="SMR" id="B5R0S0"/>
<dbReference type="GeneID" id="98186237"/>
<dbReference type="KEGG" id="set:SEN4159"/>
<dbReference type="HOGENOM" id="CLU_148710_2_3_6"/>
<dbReference type="Proteomes" id="UP000000613">
    <property type="component" value="Chromosome"/>
</dbReference>
<dbReference type="GO" id="GO:0022627">
    <property type="term" value="C:cytosolic small ribosomal subunit"/>
    <property type="evidence" value="ECO:0007669"/>
    <property type="project" value="TreeGrafter"/>
</dbReference>
<dbReference type="GO" id="GO:0070181">
    <property type="term" value="F:small ribosomal subunit rRNA binding"/>
    <property type="evidence" value="ECO:0007669"/>
    <property type="project" value="TreeGrafter"/>
</dbReference>
<dbReference type="GO" id="GO:0003735">
    <property type="term" value="F:structural constituent of ribosome"/>
    <property type="evidence" value="ECO:0007669"/>
    <property type="project" value="InterPro"/>
</dbReference>
<dbReference type="GO" id="GO:0006412">
    <property type="term" value="P:translation"/>
    <property type="evidence" value="ECO:0007669"/>
    <property type="project" value="UniProtKB-UniRule"/>
</dbReference>
<dbReference type="FunFam" id="4.10.640.10:FF:000001">
    <property type="entry name" value="30S ribosomal protein S18"/>
    <property type="match status" value="1"/>
</dbReference>
<dbReference type="Gene3D" id="4.10.640.10">
    <property type="entry name" value="Ribosomal protein S18"/>
    <property type="match status" value="1"/>
</dbReference>
<dbReference type="HAMAP" id="MF_00270">
    <property type="entry name" value="Ribosomal_bS18"/>
    <property type="match status" value="1"/>
</dbReference>
<dbReference type="InterPro" id="IPR001648">
    <property type="entry name" value="Ribosomal_bS18"/>
</dbReference>
<dbReference type="InterPro" id="IPR018275">
    <property type="entry name" value="Ribosomal_bS18_CS"/>
</dbReference>
<dbReference type="InterPro" id="IPR036870">
    <property type="entry name" value="Ribosomal_bS18_sf"/>
</dbReference>
<dbReference type="NCBIfam" id="TIGR00165">
    <property type="entry name" value="S18"/>
    <property type="match status" value="1"/>
</dbReference>
<dbReference type="PANTHER" id="PTHR13479">
    <property type="entry name" value="30S RIBOSOMAL PROTEIN S18"/>
    <property type="match status" value="1"/>
</dbReference>
<dbReference type="PANTHER" id="PTHR13479:SF40">
    <property type="entry name" value="SMALL RIBOSOMAL SUBUNIT PROTEIN BS18M"/>
    <property type="match status" value="1"/>
</dbReference>
<dbReference type="Pfam" id="PF01084">
    <property type="entry name" value="Ribosomal_S18"/>
    <property type="match status" value="1"/>
</dbReference>
<dbReference type="PRINTS" id="PR00974">
    <property type="entry name" value="RIBOSOMALS18"/>
</dbReference>
<dbReference type="SUPFAM" id="SSF46911">
    <property type="entry name" value="Ribosomal protein S18"/>
    <property type="match status" value="1"/>
</dbReference>
<dbReference type="PROSITE" id="PS00057">
    <property type="entry name" value="RIBOSOMAL_S18"/>
    <property type="match status" value="1"/>
</dbReference>
<feature type="chain" id="PRO_1000114445" description="Small ribosomal subunit protein bS18">
    <location>
        <begin position="1"/>
        <end position="75"/>
    </location>
</feature>
<protein>
    <recommendedName>
        <fullName evidence="1">Small ribosomal subunit protein bS18</fullName>
    </recommendedName>
    <alternativeName>
        <fullName evidence="2">30S ribosomal protein S18</fullName>
    </alternativeName>
</protein>
<reference key="1">
    <citation type="journal article" date="2008" name="Genome Res.">
        <title>Comparative genome analysis of Salmonella enteritidis PT4 and Salmonella gallinarum 287/91 provides insights into evolutionary and host adaptation pathways.</title>
        <authorList>
            <person name="Thomson N.R."/>
            <person name="Clayton D.J."/>
            <person name="Windhorst D."/>
            <person name="Vernikos G."/>
            <person name="Davidson S."/>
            <person name="Churcher C."/>
            <person name="Quail M.A."/>
            <person name="Stevens M."/>
            <person name="Jones M.A."/>
            <person name="Watson M."/>
            <person name="Barron A."/>
            <person name="Layton A."/>
            <person name="Pickard D."/>
            <person name="Kingsley R.A."/>
            <person name="Bignell A."/>
            <person name="Clark L."/>
            <person name="Harris B."/>
            <person name="Ormond D."/>
            <person name="Abdellah Z."/>
            <person name="Brooks K."/>
            <person name="Cherevach I."/>
            <person name="Chillingworth T."/>
            <person name="Woodward J."/>
            <person name="Norberczak H."/>
            <person name="Lord A."/>
            <person name="Arrowsmith C."/>
            <person name="Jagels K."/>
            <person name="Moule S."/>
            <person name="Mungall K."/>
            <person name="Saunders M."/>
            <person name="Whitehead S."/>
            <person name="Chabalgoity J.A."/>
            <person name="Maskell D."/>
            <person name="Humphreys T."/>
            <person name="Roberts M."/>
            <person name="Barrow P.A."/>
            <person name="Dougan G."/>
            <person name="Parkhill J."/>
        </authorList>
    </citation>
    <scope>NUCLEOTIDE SEQUENCE [LARGE SCALE GENOMIC DNA]</scope>
    <source>
        <strain>P125109</strain>
    </source>
</reference>
<evidence type="ECO:0000255" key="1">
    <source>
        <dbReference type="HAMAP-Rule" id="MF_00270"/>
    </source>
</evidence>
<evidence type="ECO:0000305" key="2"/>
<name>RS18_SALEP</name>
<sequence>MARYFRRRKFCRFTAEGVQEIDYKDIATLKNYITESGKIVPSRITGTRAKYQRQLARAIKRARYLSLLPYTDRHQ</sequence>
<proteinExistence type="inferred from homology"/>
<gene>
    <name evidence="1" type="primary">rpsR</name>
    <name type="ordered locus">SEN4159</name>
</gene>
<comment type="function">
    <text evidence="1">Binds as a heterodimer with protein bS6 to the central domain of the 16S rRNA, where it helps stabilize the platform of the 30S subunit.</text>
</comment>
<comment type="subunit">
    <text evidence="1">Part of the 30S ribosomal subunit. Forms a tight heterodimer with protein bS6.</text>
</comment>
<comment type="similarity">
    <text evidence="1">Belongs to the bacterial ribosomal protein bS18 family.</text>
</comment>
<accession>B5R0S0</accession>
<keyword id="KW-0687">Ribonucleoprotein</keyword>
<keyword id="KW-0689">Ribosomal protein</keyword>
<keyword id="KW-0694">RNA-binding</keyword>
<keyword id="KW-0699">rRNA-binding</keyword>